<feature type="chain" id="PRO_0000049844" description="Uncharacterized protein YqxA">
    <location>
        <begin position="1"/>
        <end position="112"/>
    </location>
</feature>
<keyword id="KW-1185">Reference proteome</keyword>
<gene>
    <name type="primary">yqxA</name>
    <name type="synonym">yqeP</name>
    <name type="ordered locus">BSU25520</name>
</gene>
<reference key="1">
    <citation type="submission" date="1993-09" db="EMBL/GenBank/DDBJ databases">
        <authorList>
            <person name="Takemaru K."/>
            <person name="Sato T."/>
            <person name="Kobayashi Y."/>
        </authorList>
    </citation>
    <scope>NUCLEOTIDE SEQUENCE [GENOMIC DNA]</scope>
    <source>
        <strain>168 / JH642</strain>
    </source>
</reference>
<reference key="2">
    <citation type="journal article" date="1996" name="Microbiology">
        <title>Systematic sequencing of the 283 kb 210 degrees-232 degrees region of the Bacillus subtilis genome containing the skin element and many sporulation genes.</title>
        <authorList>
            <person name="Mizuno M."/>
            <person name="Masuda S."/>
            <person name="Takemaru K."/>
            <person name="Hosono S."/>
            <person name="Sato T."/>
            <person name="Takeuchi M."/>
            <person name="Kobayashi Y."/>
        </authorList>
    </citation>
    <scope>NUCLEOTIDE SEQUENCE [GENOMIC DNA]</scope>
    <source>
        <strain>168 / JH642</strain>
    </source>
</reference>
<reference key="3">
    <citation type="journal article" date="1997" name="Nature">
        <title>The complete genome sequence of the Gram-positive bacterium Bacillus subtilis.</title>
        <authorList>
            <person name="Kunst F."/>
            <person name="Ogasawara N."/>
            <person name="Moszer I."/>
            <person name="Albertini A.M."/>
            <person name="Alloni G."/>
            <person name="Azevedo V."/>
            <person name="Bertero M.G."/>
            <person name="Bessieres P."/>
            <person name="Bolotin A."/>
            <person name="Borchert S."/>
            <person name="Borriss R."/>
            <person name="Boursier L."/>
            <person name="Brans A."/>
            <person name="Braun M."/>
            <person name="Brignell S.C."/>
            <person name="Bron S."/>
            <person name="Brouillet S."/>
            <person name="Bruschi C.V."/>
            <person name="Caldwell B."/>
            <person name="Capuano V."/>
            <person name="Carter N.M."/>
            <person name="Choi S.-K."/>
            <person name="Codani J.-J."/>
            <person name="Connerton I.F."/>
            <person name="Cummings N.J."/>
            <person name="Daniel R.A."/>
            <person name="Denizot F."/>
            <person name="Devine K.M."/>
            <person name="Duesterhoeft A."/>
            <person name="Ehrlich S.D."/>
            <person name="Emmerson P.T."/>
            <person name="Entian K.-D."/>
            <person name="Errington J."/>
            <person name="Fabret C."/>
            <person name="Ferrari E."/>
            <person name="Foulger D."/>
            <person name="Fritz C."/>
            <person name="Fujita M."/>
            <person name="Fujita Y."/>
            <person name="Fuma S."/>
            <person name="Galizzi A."/>
            <person name="Galleron N."/>
            <person name="Ghim S.-Y."/>
            <person name="Glaser P."/>
            <person name="Goffeau A."/>
            <person name="Golightly E.J."/>
            <person name="Grandi G."/>
            <person name="Guiseppi G."/>
            <person name="Guy B.J."/>
            <person name="Haga K."/>
            <person name="Haiech J."/>
            <person name="Harwood C.R."/>
            <person name="Henaut A."/>
            <person name="Hilbert H."/>
            <person name="Holsappel S."/>
            <person name="Hosono S."/>
            <person name="Hullo M.-F."/>
            <person name="Itaya M."/>
            <person name="Jones L.-M."/>
            <person name="Joris B."/>
            <person name="Karamata D."/>
            <person name="Kasahara Y."/>
            <person name="Klaerr-Blanchard M."/>
            <person name="Klein C."/>
            <person name="Kobayashi Y."/>
            <person name="Koetter P."/>
            <person name="Koningstein G."/>
            <person name="Krogh S."/>
            <person name="Kumano M."/>
            <person name="Kurita K."/>
            <person name="Lapidus A."/>
            <person name="Lardinois S."/>
            <person name="Lauber J."/>
            <person name="Lazarevic V."/>
            <person name="Lee S.-M."/>
            <person name="Levine A."/>
            <person name="Liu H."/>
            <person name="Masuda S."/>
            <person name="Mauel C."/>
            <person name="Medigue C."/>
            <person name="Medina N."/>
            <person name="Mellado R.P."/>
            <person name="Mizuno M."/>
            <person name="Moestl D."/>
            <person name="Nakai S."/>
            <person name="Noback M."/>
            <person name="Noone D."/>
            <person name="O'Reilly M."/>
            <person name="Ogawa K."/>
            <person name="Ogiwara A."/>
            <person name="Oudega B."/>
            <person name="Park S.-H."/>
            <person name="Parro V."/>
            <person name="Pohl T.M."/>
            <person name="Portetelle D."/>
            <person name="Porwollik S."/>
            <person name="Prescott A.M."/>
            <person name="Presecan E."/>
            <person name="Pujic P."/>
            <person name="Purnelle B."/>
            <person name="Rapoport G."/>
            <person name="Rey M."/>
            <person name="Reynolds S."/>
            <person name="Rieger M."/>
            <person name="Rivolta C."/>
            <person name="Rocha E."/>
            <person name="Roche B."/>
            <person name="Rose M."/>
            <person name="Sadaie Y."/>
            <person name="Sato T."/>
            <person name="Scanlan E."/>
            <person name="Schleich S."/>
            <person name="Schroeter R."/>
            <person name="Scoffone F."/>
            <person name="Sekiguchi J."/>
            <person name="Sekowska A."/>
            <person name="Seror S.J."/>
            <person name="Serror P."/>
            <person name="Shin B.-S."/>
            <person name="Soldo B."/>
            <person name="Sorokin A."/>
            <person name="Tacconi E."/>
            <person name="Takagi T."/>
            <person name="Takahashi H."/>
            <person name="Takemaru K."/>
            <person name="Takeuchi M."/>
            <person name="Tamakoshi A."/>
            <person name="Tanaka T."/>
            <person name="Terpstra P."/>
            <person name="Tognoni A."/>
            <person name="Tosato V."/>
            <person name="Uchiyama S."/>
            <person name="Vandenbol M."/>
            <person name="Vannier F."/>
            <person name="Vassarotti A."/>
            <person name="Viari A."/>
            <person name="Wambutt R."/>
            <person name="Wedler E."/>
            <person name="Wedler H."/>
            <person name="Weitzenegger T."/>
            <person name="Winters P."/>
            <person name="Wipat A."/>
            <person name="Yamamoto H."/>
            <person name="Yamane K."/>
            <person name="Yasumoto K."/>
            <person name="Yata K."/>
            <person name="Yoshida K."/>
            <person name="Yoshikawa H.-F."/>
            <person name="Zumstein E."/>
            <person name="Yoshikawa H."/>
            <person name="Danchin A."/>
        </authorList>
    </citation>
    <scope>NUCLEOTIDE SEQUENCE [LARGE SCALE GENOMIC DNA]</scope>
    <source>
        <strain>168</strain>
    </source>
</reference>
<accession>P38425</accession>
<protein>
    <recommendedName>
        <fullName>Uncharacterized protein YqxA</fullName>
    </recommendedName>
    <alternativeName>
        <fullName>ORF79</fullName>
    </alternativeName>
</protein>
<sequence length="112" mass="12521">MIAYFGKCLLLVTIMFLGVLFGMQQANHGMLSMKGYHDPSLKGAFTLTDGKDNEKEASILGETVTAKDLVEKQKELEKVETFNMFSKAGKALSDTVTNTAQSMYEWIRDMNQ</sequence>
<name>YQXA_BACSU</name>
<dbReference type="EMBL" id="D17650">
    <property type="protein sequence ID" value="BAA04543.1"/>
    <property type="molecule type" value="Genomic_DNA"/>
</dbReference>
<dbReference type="EMBL" id="D84432">
    <property type="protein sequence ID" value="BAA12459.1"/>
    <property type="molecule type" value="Genomic_DNA"/>
</dbReference>
<dbReference type="EMBL" id="AL009126">
    <property type="protein sequence ID" value="CAB14494.1"/>
    <property type="molecule type" value="Genomic_DNA"/>
</dbReference>
<dbReference type="PIR" id="F69967">
    <property type="entry name" value="F69967"/>
</dbReference>
<dbReference type="RefSeq" id="NP_390430.1">
    <property type="nucleotide sequence ID" value="NC_000964.3"/>
</dbReference>
<dbReference type="RefSeq" id="WP_004399162.1">
    <property type="nucleotide sequence ID" value="NZ_OZ025638.1"/>
</dbReference>
<dbReference type="FunCoup" id="P38425">
    <property type="interactions" value="12"/>
</dbReference>
<dbReference type="STRING" id="224308.BSU25520"/>
<dbReference type="PaxDb" id="224308-BSU25520"/>
<dbReference type="DNASU" id="937841"/>
<dbReference type="EnsemblBacteria" id="CAB14494">
    <property type="protein sequence ID" value="CAB14494"/>
    <property type="gene ID" value="BSU_25520"/>
</dbReference>
<dbReference type="GeneID" id="937841"/>
<dbReference type="KEGG" id="bsu:BSU25520"/>
<dbReference type="PATRIC" id="fig|224308.179.peg.2773"/>
<dbReference type="eggNOG" id="ENOG50345EE">
    <property type="taxonomic scope" value="Bacteria"/>
</dbReference>
<dbReference type="InParanoid" id="P38425"/>
<dbReference type="OrthoDB" id="2941402at2"/>
<dbReference type="BioCyc" id="BSUB:BSU25520-MONOMER"/>
<dbReference type="Proteomes" id="UP000001570">
    <property type="component" value="Chromosome"/>
</dbReference>
<dbReference type="InterPro" id="IPR020534">
    <property type="entry name" value="Uncharacterised_YqxA"/>
</dbReference>
<dbReference type="Pfam" id="PF12438">
    <property type="entry name" value="DUF3679"/>
    <property type="match status" value="1"/>
</dbReference>
<proteinExistence type="predicted"/>
<organism>
    <name type="scientific">Bacillus subtilis (strain 168)</name>
    <dbReference type="NCBI Taxonomy" id="224308"/>
    <lineage>
        <taxon>Bacteria</taxon>
        <taxon>Bacillati</taxon>
        <taxon>Bacillota</taxon>
        <taxon>Bacilli</taxon>
        <taxon>Bacillales</taxon>
        <taxon>Bacillaceae</taxon>
        <taxon>Bacillus</taxon>
    </lineage>
</organism>